<comment type="function">
    <text evidence="1 6">Transcription factor. Interacts specifically with the W box (5'-(T)TGAC[CT]-3'), a frequently occurring elicitor-responsive cis-acting element (By similarity). Also acts as a disease resistance protein that specifically recognizes the AvrRps4 type III effector avirulence protein from P.syringae. Heterodimerization with RPS4B is required to form a functional complex to recognize AvrRps4 and to mediate the hypersensitive response (PubMed:25744164).</text>
</comment>
<comment type="subunit">
    <text evidence="6">Interacts with RPS4B. RPS4B-RRS1B heterodimer interacts with the bacterial effectors AvrRps4 and PopP2.</text>
</comment>
<comment type="subcellular location">
    <subcellularLocation>
        <location evidence="8">Nucleus</location>
    </subcellularLocation>
</comment>
<comment type="alternative products">
    <event type="alternative splicing"/>
    <isoform>
        <id>Q9FL92-1</id>
        <name>1</name>
        <sequence type="displayed"/>
    </isoform>
    <text>A number of isoforms are produced. According to EST sequences.</text>
</comment>
<comment type="domain">
    <text evidence="6">The TIR domain is a signaling domain involved in cell death induction. It is involved in heterodimerization of RPS4B with RRS1B, but other domains also contribute to the interaction.</text>
</comment>
<comment type="similarity">
    <text evidence="8">Belongs to the disease resistance TIR-NB-LRR family.</text>
</comment>
<comment type="online information" name="NIB-LRRS">
    <link uri="http://niblrrs.ucdavis.edu"/>
    <text>Functional and comparative genomics of disease resistance gene homologs</text>
</comment>
<sequence length="1372" mass="155701">MTESEQIVYISCIEEVRYSFVSHLSKALQRKGVNDVFIDSDDSLSNESQSMVERARVSVMILPGNRTVSLDKLVKVLDCQKNKDQVVVPVLYGVRSSETEWLSALDSKGFSSVHHSRKECSDSQLVKETVRDVYEKLFYMERIGIYSKLLEIEKMINKQPLDIRCVGIWGMPGIGKTTLAKAVFDQMSGEFDAHCFIEDYTKAIQEKGVYCLLEEQFLKENAGASGTVTKLSLLRDRLNNKRVLVVLDDVRSPLVVESFLGGFDWFGPKSLIIITSKDKSVFRLCRVNQIYEVQGLNEKEALQLFSLCASIDDMAEQNLHEVSMKVIKYANGHPLALNLYGRELMGKKRPPEMEIAFLKLKECPPAIFVDAIKSSYDTLNDREKNIFLDIACFFQGENVDYVMQLLEGCGFFPHVGIDVLVEKSLVTISENRVRMHNLIQDVGRQIINRETRQTKRRSRLWEPCSIKYLLEDKEQNENEEQKTTFERAQVPEEIEGMFLDTSNLSFDIKHVAFDNMLNLRLFKIYSSNPEVHHVNNFLKGSLSSLPNVLRLLHWENYPLQFLPQNFDPIHLVEINMPYSQLKKLWGGTKDLEMLKTIRLCHSQQLVDIDDLLKAQNLEVVDLQGCTRLQSFPATGQLLHLRVVNLSGCTEIKSFPEIPPNIETLNLQGTGIIELPLSIVKPNYRELLNLLAEIPGLSGVSNLEQSDLKPLTSLMKISTSYQNPGKLSCLELNDCSRLRSLPNMVNLELLKALDLSGCSELETIQGFPRNLKELYLVGTAVRQVPQLPQSLEFFNAHGCVSLKSIRLDFKKLPVHYTFSNCFDLSPQVVNDFLVQAMANVIAKHIPRERHVTGFSQKTVQRSSRDSQQELNKTLAFSFCAPSHANQNSKLDLQPGSSSMTRLDPSWRNTLVGFAMLVQVAFSEGYCDDTDFGISCVCKWKNKEGHSHRREINLHCWALGKAVERDHTFVFFDVNMRPDTDEGNDPDIWADLVVFEFFPVNKQRKPLNDSCTVTRCGVRLITAVNCNTSIENISPVLSLDPMEVSGNEDEEVLRVRYAGLQEIYKALFLYIAGLFNDEDVGLVAPLIANIIDMDVSYGLKVLAYRSLIRVSSNGEIVMHYLLRQMGKEILHTESKKTDKLVDNIQSSMIATKEIEITRSKSRRKNNKEKRVVCVVDRGSRSSDLWVWRKYGQKPIKSSPYPRSYYRCASSKGCFARKQVERSRTDPNVSVITYISEHNHPFPTLRNTLAGSTRSSSSKCSDVTTSASSTVSQDKEGPDKSHLPSSPASPPYAAMVVKEEDMEQWDNMEFDVDVEEDTFIPELFPEDTFADMDKLEENSQTMFLSRRSSGGNMEAQGKNSSDDREVNLPSKILNR</sequence>
<protein>
    <recommendedName>
        <fullName evidence="7">Disease resistance protein RRS1B</fullName>
    </recommendedName>
    <alternativeName>
        <fullName>Probable WRKY transcription factor 16</fullName>
    </alternativeName>
    <alternativeName>
        <fullName>WRKY DNA-binding protein 16</fullName>
    </alternativeName>
</protein>
<feature type="chain" id="PRO_0000133658" description="Disease resistance protein RRS1B">
    <location>
        <begin position="1"/>
        <end position="1372"/>
    </location>
</feature>
<feature type="domain" description="TIR" evidence="3">
    <location>
        <begin position="2"/>
        <end position="137"/>
    </location>
</feature>
<feature type="domain" description="NB-ARC">
    <location>
        <begin position="166"/>
        <end position="417"/>
    </location>
</feature>
<feature type="repeat" description="LRR 1" evidence="2">
    <location>
        <begin position="491"/>
        <end position="515"/>
    </location>
</feature>
<feature type="repeat" description="LRR 2; degenerate" evidence="8">
    <location>
        <begin position="528"/>
        <end position="544"/>
    </location>
</feature>
<feature type="repeat" description="LRR 3" evidence="2">
    <location>
        <begin position="545"/>
        <end position="568"/>
    </location>
</feature>
<feature type="repeat" description="LRR 4" evidence="2">
    <location>
        <begin position="570"/>
        <end position="591"/>
    </location>
</feature>
<feature type="repeat" description="LRR 5" evidence="2">
    <location>
        <begin position="614"/>
        <end position="637"/>
    </location>
</feature>
<feature type="repeat" description="LRR 6" evidence="2">
    <location>
        <begin position="638"/>
        <end position="658"/>
    </location>
</feature>
<feature type="repeat" description="LRR 7" evidence="2">
    <location>
        <begin position="659"/>
        <end position="681"/>
    </location>
</feature>
<feature type="repeat" description="LRR 8" evidence="2">
    <location>
        <begin position="693"/>
        <end position="718"/>
    </location>
</feature>
<feature type="repeat" description="LRR 9" evidence="2">
    <location>
        <begin position="723"/>
        <end position="747"/>
    </location>
</feature>
<feature type="repeat" description="LRR 10" evidence="2">
    <location>
        <begin position="749"/>
        <end position="767"/>
    </location>
</feature>
<feature type="repeat" description="LRR 11" evidence="2">
    <location>
        <begin position="768"/>
        <end position="792"/>
    </location>
</feature>
<feature type="repeat" description="LRR 12" evidence="2">
    <location>
        <begin position="798"/>
        <end position="823"/>
    </location>
</feature>
<feature type="DNA-binding region" description="WRKY" evidence="4">
    <location>
        <begin position="1174"/>
        <end position="1240"/>
    </location>
</feature>
<feature type="region of interest" description="Disordered" evidence="5">
    <location>
        <begin position="1246"/>
        <end position="1288"/>
    </location>
</feature>
<feature type="region of interest" description="Disordered" evidence="5">
    <location>
        <begin position="1337"/>
        <end position="1372"/>
    </location>
</feature>
<feature type="short sequence motif" description="Nuclear localization signal" evidence="2">
    <location>
        <begin position="950"/>
        <end position="964"/>
    </location>
</feature>
<feature type="compositionally biased region" description="Low complexity" evidence="5">
    <location>
        <begin position="1249"/>
        <end position="1269"/>
    </location>
</feature>
<feature type="compositionally biased region" description="Basic and acidic residues" evidence="5">
    <location>
        <begin position="1270"/>
        <end position="1279"/>
    </location>
</feature>
<feature type="compositionally biased region" description="Polar residues" evidence="5">
    <location>
        <begin position="1337"/>
        <end position="1348"/>
    </location>
</feature>
<feature type="binding site" evidence="2">
    <location>
        <begin position="170"/>
        <end position="177"/>
    </location>
    <ligand>
        <name>ATP</name>
        <dbReference type="ChEBI" id="CHEBI:30616"/>
    </ligand>
</feature>
<dbReference type="EMBL" id="AB010693">
    <property type="protein sequence ID" value="BAB10888.1"/>
    <property type="molecule type" value="Genomic_DNA"/>
</dbReference>
<dbReference type="EMBL" id="AB019224">
    <property type="protein sequence ID" value="BAB10888.1"/>
    <property type="status" value="JOINED"/>
    <property type="molecule type" value="Genomic_DNA"/>
</dbReference>
<dbReference type="EMBL" id="CP002688">
    <property type="protein sequence ID" value="AED95194.1"/>
    <property type="molecule type" value="Genomic_DNA"/>
</dbReference>
<dbReference type="RefSeq" id="NP_851133.1">
    <molecule id="Q9FL92-1"/>
    <property type="nucleotide sequence ID" value="NM_180802.2"/>
</dbReference>
<dbReference type="SMR" id="Q9FL92"/>
<dbReference type="BioGRID" id="19785">
    <property type="interactions" value="1"/>
</dbReference>
<dbReference type="FunCoup" id="Q9FL92">
    <property type="interactions" value="19"/>
</dbReference>
<dbReference type="IntAct" id="Q9FL92">
    <property type="interactions" value="1"/>
</dbReference>
<dbReference type="STRING" id="3702.Q9FL92"/>
<dbReference type="iPTMnet" id="Q9FL92"/>
<dbReference type="PaxDb" id="3702-AT5G45050.1"/>
<dbReference type="EnsemblPlants" id="AT5G45050.1">
    <molecule id="Q9FL92-1"/>
    <property type="protein sequence ID" value="AT5G45050.1"/>
    <property type="gene ID" value="AT5G45050"/>
</dbReference>
<dbReference type="GeneID" id="834536"/>
<dbReference type="Gramene" id="AT5G45050.1">
    <molecule id="Q9FL92-1"/>
    <property type="protein sequence ID" value="AT5G45050.1"/>
    <property type="gene ID" value="AT5G45050"/>
</dbReference>
<dbReference type="KEGG" id="ath:AT5G45050"/>
<dbReference type="Araport" id="AT5G45050"/>
<dbReference type="TAIR" id="AT5G45050">
    <property type="gene designation" value="WRKY16"/>
</dbReference>
<dbReference type="HOGENOM" id="CLU_001561_0_3_1"/>
<dbReference type="InParanoid" id="Q9FL92"/>
<dbReference type="PhylomeDB" id="Q9FL92"/>
<dbReference type="PRO" id="PR:Q9FL92"/>
<dbReference type="Proteomes" id="UP000006548">
    <property type="component" value="Chromosome 5"/>
</dbReference>
<dbReference type="ExpressionAtlas" id="Q9FL92">
    <property type="expression patterns" value="baseline and differential"/>
</dbReference>
<dbReference type="GO" id="GO:0005634">
    <property type="term" value="C:nucleus"/>
    <property type="evidence" value="ECO:0007669"/>
    <property type="project" value="UniProtKB-SubCell"/>
</dbReference>
<dbReference type="GO" id="GO:0000325">
    <property type="term" value="C:plant-type vacuole"/>
    <property type="evidence" value="ECO:0007005"/>
    <property type="project" value="TAIR"/>
</dbReference>
<dbReference type="GO" id="GO:0043531">
    <property type="term" value="F:ADP binding"/>
    <property type="evidence" value="ECO:0007669"/>
    <property type="project" value="InterPro"/>
</dbReference>
<dbReference type="GO" id="GO:0005524">
    <property type="term" value="F:ATP binding"/>
    <property type="evidence" value="ECO:0007669"/>
    <property type="project" value="UniProtKB-KW"/>
</dbReference>
<dbReference type="GO" id="GO:0003700">
    <property type="term" value="F:DNA-binding transcription factor activity"/>
    <property type="evidence" value="ECO:0000250"/>
    <property type="project" value="TAIR"/>
</dbReference>
<dbReference type="GO" id="GO:0043565">
    <property type="term" value="F:sequence-specific DNA binding"/>
    <property type="evidence" value="ECO:0007669"/>
    <property type="project" value="InterPro"/>
</dbReference>
<dbReference type="GO" id="GO:0042742">
    <property type="term" value="P:defense response to bacterium"/>
    <property type="evidence" value="ECO:0000315"/>
    <property type="project" value="UniProtKB"/>
</dbReference>
<dbReference type="GO" id="GO:0002758">
    <property type="term" value="P:innate immune response-activating signaling pathway"/>
    <property type="evidence" value="ECO:0000314"/>
    <property type="project" value="UniProtKB"/>
</dbReference>
<dbReference type="FunFam" id="1.10.8.430:FF:000004">
    <property type="entry name" value="Disease resistance protein (TIR-NBS-LRR class)"/>
    <property type="match status" value="1"/>
</dbReference>
<dbReference type="FunFam" id="3.40.50.300:FF:001957">
    <property type="entry name" value="Disease resistance protein (TIR-NBS-LRR class)"/>
    <property type="match status" value="1"/>
</dbReference>
<dbReference type="FunFam" id="3.80.10.10:FF:001920">
    <property type="entry name" value="Disease resistance protein (TIR-NBS-LRR class)"/>
    <property type="match status" value="1"/>
</dbReference>
<dbReference type="FunFam" id="2.20.25.80:FF:000011">
    <property type="entry name" value="Disease resistance protein RRS1"/>
    <property type="match status" value="1"/>
</dbReference>
<dbReference type="FunFam" id="3.80.10.10:FF:001535">
    <property type="entry name" value="Disease resistance protein RRS1B"/>
    <property type="match status" value="1"/>
</dbReference>
<dbReference type="Gene3D" id="1.10.8.430">
    <property type="entry name" value="Helical domain of apoptotic protease-activating factors"/>
    <property type="match status" value="1"/>
</dbReference>
<dbReference type="Gene3D" id="3.40.50.300">
    <property type="entry name" value="P-loop containing nucleotide triphosphate hydrolases"/>
    <property type="match status" value="1"/>
</dbReference>
<dbReference type="Gene3D" id="3.80.10.10">
    <property type="entry name" value="Ribonuclease Inhibitor"/>
    <property type="match status" value="2"/>
</dbReference>
<dbReference type="Gene3D" id="3.40.50.10140">
    <property type="entry name" value="Toll/interleukin-1 receptor homology (TIR) domain"/>
    <property type="match status" value="1"/>
</dbReference>
<dbReference type="Gene3D" id="2.20.25.80">
    <property type="entry name" value="WRKY domain"/>
    <property type="match status" value="1"/>
</dbReference>
<dbReference type="InterPro" id="IPR042197">
    <property type="entry name" value="Apaf_helical"/>
</dbReference>
<dbReference type="InterPro" id="IPR044974">
    <property type="entry name" value="Disease_R_plants"/>
</dbReference>
<dbReference type="InterPro" id="IPR011713">
    <property type="entry name" value="Leu-rich_rpt_3"/>
</dbReference>
<dbReference type="InterPro" id="IPR032675">
    <property type="entry name" value="LRR_dom_sf"/>
</dbReference>
<dbReference type="InterPro" id="IPR002182">
    <property type="entry name" value="NB-ARC"/>
</dbReference>
<dbReference type="InterPro" id="IPR027417">
    <property type="entry name" value="P-loop_NTPase"/>
</dbReference>
<dbReference type="InterPro" id="IPR000157">
    <property type="entry name" value="TIR_dom"/>
</dbReference>
<dbReference type="InterPro" id="IPR035897">
    <property type="entry name" value="Toll_tir_struct_dom_sf"/>
</dbReference>
<dbReference type="InterPro" id="IPR036390">
    <property type="entry name" value="WH_DNA-bd_sf"/>
</dbReference>
<dbReference type="InterPro" id="IPR003657">
    <property type="entry name" value="WRKY_dom"/>
</dbReference>
<dbReference type="InterPro" id="IPR036576">
    <property type="entry name" value="WRKY_dom_sf"/>
</dbReference>
<dbReference type="PANTHER" id="PTHR11017:SF456">
    <property type="entry name" value="DISEASE RESISTANCE PROTEIN RRS1"/>
    <property type="match status" value="1"/>
</dbReference>
<dbReference type="PANTHER" id="PTHR11017">
    <property type="entry name" value="LEUCINE-RICH REPEAT-CONTAINING PROTEIN"/>
    <property type="match status" value="1"/>
</dbReference>
<dbReference type="Pfam" id="PF07725">
    <property type="entry name" value="LRR_3"/>
    <property type="match status" value="1"/>
</dbReference>
<dbReference type="Pfam" id="PF00931">
    <property type="entry name" value="NB-ARC"/>
    <property type="match status" value="1"/>
</dbReference>
<dbReference type="Pfam" id="PF01582">
    <property type="entry name" value="TIR"/>
    <property type="match status" value="1"/>
</dbReference>
<dbReference type="Pfam" id="PF23282">
    <property type="entry name" value="WHD_ROQ1"/>
    <property type="match status" value="2"/>
</dbReference>
<dbReference type="Pfam" id="PF03106">
    <property type="entry name" value="WRKY"/>
    <property type="match status" value="1"/>
</dbReference>
<dbReference type="PRINTS" id="PR00364">
    <property type="entry name" value="DISEASERSIST"/>
</dbReference>
<dbReference type="SMART" id="SM00774">
    <property type="entry name" value="WRKY"/>
    <property type="match status" value="1"/>
</dbReference>
<dbReference type="SUPFAM" id="SSF52058">
    <property type="entry name" value="L domain-like"/>
    <property type="match status" value="1"/>
</dbReference>
<dbReference type="SUPFAM" id="SSF52540">
    <property type="entry name" value="P-loop containing nucleoside triphosphate hydrolases"/>
    <property type="match status" value="1"/>
</dbReference>
<dbReference type="SUPFAM" id="SSF52200">
    <property type="entry name" value="Toll/Interleukin receptor TIR domain"/>
    <property type="match status" value="1"/>
</dbReference>
<dbReference type="SUPFAM" id="SSF46785">
    <property type="entry name" value="Winged helix' DNA-binding domain"/>
    <property type="match status" value="1"/>
</dbReference>
<dbReference type="SUPFAM" id="SSF118290">
    <property type="entry name" value="WRKY DNA-binding domain"/>
    <property type="match status" value="1"/>
</dbReference>
<dbReference type="PROSITE" id="PS50104">
    <property type="entry name" value="TIR"/>
    <property type="match status" value="1"/>
</dbReference>
<dbReference type="PROSITE" id="PS50811">
    <property type="entry name" value="WRKY"/>
    <property type="match status" value="1"/>
</dbReference>
<organism>
    <name type="scientific">Arabidopsis thaliana</name>
    <name type="common">Mouse-ear cress</name>
    <dbReference type="NCBI Taxonomy" id="3702"/>
    <lineage>
        <taxon>Eukaryota</taxon>
        <taxon>Viridiplantae</taxon>
        <taxon>Streptophyta</taxon>
        <taxon>Embryophyta</taxon>
        <taxon>Tracheophyta</taxon>
        <taxon>Spermatophyta</taxon>
        <taxon>Magnoliopsida</taxon>
        <taxon>eudicotyledons</taxon>
        <taxon>Gunneridae</taxon>
        <taxon>Pentapetalae</taxon>
        <taxon>rosids</taxon>
        <taxon>malvids</taxon>
        <taxon>Brassicales</taxon>
        <taxon>Brassicaceae</taxon>
        <taxon>Camelineae</taxon>
        <taxon>Arabidopsis</taxon>
    </lineage>
</organism>
<keyword id="KW-0025">Alternative splicing</keyword>
<keyword id="KW-0067">ATP-binding</keyword>
<keyword id="KW-0238">DNA-binding</keyword>
<keyword id="KW-0433">Leucine-rich repeat</keyword>
<keyword id="KW-0547">Nucleotide-binding</keyword>
<keyword id="KW-0539">Nucleus</keyword>
<keyword id="KW-0611">Plant defense</keyword>
<keyword id="KW-1185">Reference proteome</keyword>
<keyword id="KW-0677">Repeat</keyword>
<keyword id="KW-0804">Transcription</keyword>
<keyword id="KW-0805">Transcription regulation</keyword>
<gene>
    <name evidence="7" type="primary">RRS1B</name>
    <name type="synonym">WRKY16</name>
    <name type="ordered locus">At5g45050</name>
    <name type="ORF">K21C13.24</name>
</gene>
<proteinExistence type="evidence at protein level"/>
<name>RRS1B_ARATH</name>
<accession>Q9FL92</accession>
<evidence type="ECO:0000250" key="1">
    <source>
        <dbReference type="UniProtKB" id="P0DKH5"/>
    </source>
</evidence>
<evidence type="ECO:0000255" key="2"/>
<evidence type="ECO:0000255" key="3">
    <source>
        <dbReference type="PROSITE-ProRule" id="PRU00204"/>
    </source>
</evidence>
<evidence type="ECO:0000255" key="4">
    <source>
        <dbReference type="PROSITE-ProRule" id="PRU00223"/>
    </source>
</evidence>
<evidence type="ECO:0000256" key="5">
    <source>
        <dbReference type="SAM" id="MobiDB-lite"/>
    </source>
</evidence>
<evidence type="ECO:0000269" key="6">
    <source>
    </source>
</evidence>
<evidence type="ECO:0000303" key="7">
    <source>
    </source>
</evidence>
<evidence type="ECO:0000305" key="8"/>
<reference key="1">
    <citation type="journal article" date="1998" name="DNA Res.">
        <title>Structural analysis of Arabidopsis thaliana chromosome 5. V. Sequence features of the regions of 1,381,565 bp covered by twenty one physically assigned P1 and TAC clones.</title>
        <authorList>
            <person name="Kaneko T."/>
            <person name="Kotani H."/>
            <person name="Nakamura Y."/>
            <person name="Sato S."/>
            <person name="Asamizu E."/>
            <person name="Miyajima N."/>
            <person name="Tabata S."/>
        </authorList>
    </citation>
    <scope>NUCLEOTIDE SEQUENCE [LARGE SCALE GENOMIC DNA]</scope>
    <source>
        <strain>cv. Columbia</strain>
    </source>
</reference>
<reference key="2">
    <citation type="journal article" date="2000" name="DNA Res.">
        <title>Structural analysis of Arabidopsis thaliana chromosome 5. X. Sequence features of the regions of 3,076,755 bp covered by sixty P1 and TAC clones.</title>
        <authorList>
            <person name="Sato S."/>
            <person name="Nakamura Y."/>
            <person name="Kaneko T."/>
            <person name="Katoh T."/>
            <person name="Asamizu E."/>
            <person name="Kotani H."/>
            <person name="Tabata S."/>
        </authorList>
    </citation>
    <scope>NUCLEOTIDE SEQUENCE [LARGE SCALE GENOMIC DNA]</scope>
    <source>
        <strain>cv. Columbia</strain>
    </source>
</reference>
<reference key="3">
    <citation type="journal article" date="2017" name="Plant J.">
        <title>Araport11: a complete reannotation of the Arabidopsis thaliana reference genome.</title>
        <authorList>
            <person name="Cheng C.Y."/>
            <person name="Krishnakumar V."/>
            <person name="Chan A.P."/>
            <person name="Thibaud-Nissen F."/>
            <person name="Schobel S."/>
            <person name="Town C.D."/>
        </authorList>
    </citation>
    <scope>GENOME REANNOTATION</scope>
    <source>
        <strain>cv. Columbia</strain>
    </source>
</reference>
<reference key="4">
    <citation type="journal article" date="2015" name="Nat. Commun.">
        <title>Two linked pairs of Arabidopsis TNL resistance genes independently confer recognition of bacterial effector AvrRps4.</title>
        <authorList>
            <person name="Saucet S.B."/>
            <person name="Ma Y."/>
            <person name="Sarris P.F."/>
            <person name="Furzer O.J."/>
            <person name="Sohn K.H."/>
            <person name="Jones J.D."/>
        </authorList>
    </citation>
    <scope>FUNCTION</scope>
    <scope>INTERACTION WITH RPS4B</scope>
    <scope>SUBUNIT</scope>
    <scope>DOMAIN</scope>
</reference>